<reference key="1">
    <citation type="submission" date="2006-01" db="EMBL/GenBank/DDBJ databases">
        <title>Complete sequence of Novosphingobium aromaticivorans DSM 12444.</title>
        <authorList>
            <consortium name="US DOE Joint Genome Institute"/>
            <person name="Copeland A."/>
            <person name="Lucas S."/>
            <person name="Lapidus A."/>
            <person name="Barry K."/>
            <person name="Detter J.C."/>
            <person name="Glavina T."/>
            <person name="Hammon N."/>
            <person name="Israni S."/>
            <person name="Pitluck S."/>
            <person name="Chain P."/>
            <person name="Malfatti S."/>
            <person name="Shin M."/>
            <person name="Vergez L."/>
            <person name="Schmutz J."/>
            <person name="Larimer F."/>
            <person name="Land M."/>
            <person name="Kyrpides N."/>
            <person name="Ivanova N."/>
            <person name="Fredrickson J."/>
            <person name="Balkwill D."/>
            <person name="Romine M.F."/>
            <person name="Richardson P."/>
        </authorList>
    </citation>
    <scope>NUCLEOTIDE SEQUENCE [LARGE SCALE GENOMIC DNA]</scope>
    <source>
        <strain>ATCC 700278 / DSM 12444 / CCUG 56034 / CIP 105152 / NBRC 16084 / F199</strain>
    </source>
</reference>
<sequence length="339" mass="36488">MKVYYDADCDLNLITDKKIAILGYGSQGHAHAQNLRDSGVKDVAIALRPGSASAKKAEAAGFKVLANADAAAWADILMILAPDEHQAAIYADDLHANMKPGAALAFAHGLNIHFGLIEARADIDVIMIAPKGPGHTVRSEYQRGGGVPCLIAVHQNVTGNAHDVALAYASGVGGGRSGIIETNFREECETDLFGEQVVLCGGTTALIQAGFETLVEAGYAPEMAYFECLHELKLIVDLLYEGGIANMRYSISNTAEYGDIKTGPRIITEETKKEMKRVLADIQEGRFVKDFVLDNRAGQPELKAARGLAKRHQIEETGAKLRAMMPWIGANKLVDQTKN</sequence>
<feature type="chain" id="PRO_0000252771" description="Ketol-acid reductoisomerase (NADP(+))">
    <location>
        <begin position="1"/>
        <end position="339"/>
    </location>
</feature>
<feature type="domain" description="KARI N-terminal Rossmann" evidence="2">
    <location>
        <begin position="1"/>
        <end position="182"/>
    </location>
</feature>
<feature type="domain" description="KARI C-terminal knotted" evidence="3">
    <location>
        <begin position="183"/>
        <end position="328"/>
    </location>
</feature>
<feature type="active site" evidence="1">
    <location>
        <position position="108"/>
    </location>
</feature>
<feature type="binding site" evidence="1">
    <location>
        <begin position="24"/>
        <end position="27"/>
    </location>
    <ligand>
        <name>NADP(+)</name>
        <dbReference type="ChEBI" id="CHEBI:58349"/>
    </ligand>
</feature>
<feature type="binding site" evidence="1">
    <location>
        <position position="48"/>
    </location>
    <ligand>
        <name>NADP(+)</name>
        <dbReference type="ChEBI" id="CHEBI:58349"/>
    </ligand>
</feature>
<feature type="binding site" evidence="1">
    <location>
        <position position="51"/>
    </location>
    <ligand>
        <name>NADP(+)</name>
        <dbReference type="ChEBI" id="CHEBI:58349"/>
    </ligand>
</feature>
<feature type="binding site" evidence="1">
    <location>
        <position position="53"/>
    </location>
    <ligand>
        <name>NADP(+)</name>
        <dbReference type="ChEBI" id="CHEBI:58349"/>
    </ligand>
</feature>
<feature type="binding site" evidence="1">
    <location>
        <begin position="83"/>
        <end position="86"/>
    </location>
    <ligand>
        <name>NADP(+)</name>
        <dbReference type="ChEBI" id="CHEBI:58349"/>
    </ligand>
</feature>
<feature type="binding site" evidence="1">
    <location>
        <position position="134"/>
    </location>
    <ligand>
        <name>NADP(+)</name>
        <dbReference type="ChEBI" id="CHEBI:58349"/>
    </ligand>
</feature>
<feature type="binding site" evidence="1">
    <location>
        <position position="191"/>
    </location>
    <ligand>
        <name>Mg(2+)</name>
        <dbReference type="ChEBI" id="CHEBI:18420"/>
        <label>1</label>
    </ligand>
</feature>
<feature type="binding site" evidence="1">
    <location>
        <position position="191"/>
    </location>
    <ligand>
        <name>Mg(2+)</name>
        <dbReference type="ChEBI" id="CHEBI:18420"/>
        <label>2</label>
    </ligand>
</feature>
<feature type="binding site" evidence="1">
    <location>
        <position position="195"/>
    </location>
    <ligand>
        <name>Mg(2+)</name>
        <dbReference type="ChEBI" id="CHEBI:18420"/>
        <label>1</label>
    </ligand>
</feature>
<feature type="binding site" evidence="1">
    <location>
        <position position="227"/>
    </location>
    <ligand>
        <name>Mg(2+)</name>
        <dbReference type="ChEBI" id="CHEBI:18420"/>
        <label>2</label>
    </ligand>
</feature>
<feature type="binding site" evidence="1">
    <location>
        <position position="231"/>
    </location>
    <ligand>
        <name>Mg(2+)</name>
        <dbReference type="ChEBI" id="CHEBI:18420"/>
        <label>2</label>
    </ligand>
</feature>
<feature type="binding site" evidence="1">
    <location>
        <position position="252"/>
    </location>
    <ligand>
        <name>substrate</name>
    </ligand>
</feature>
<protein>
    <recommendedName>
        <fullName evidence="1">Ketol-acid reductoisomerase (NADP(+))</fullName>
        <shortName evidence="1">KARI</shortName>
        <ecNumber evidence="1">1.1.1.86</ecNumber>
    </recommendedName>
    <alternativeName>
        <fullName evidence="1">Acetohydroxy-acid isomeroreductase</fullName>
        <shortName evidence="1">AHIR</shortName>
    </alternativeName>
    <alternativeName>
        <fullName evidence="1">Alpha-keto-beta-hydroxylacyl reductoisomerase</fullName>
    </alternativeName>
    <alternativeName>
        <fullName evidence="1">Ketol-acid reductoisomerase type 1</fullName>
    </alternativeName>
    <alternativeName>
        <fullName evidence="1">Ketol-acid reductoisomerase type I</fullName>
    </alternativeName>
</protein>
<name>ILVC_NOVAD</name>
<evidence type="ECO:0000255" key="1">
    <source>
        <dbReference type="HAMAP-Rule" id="MF_00435"/>
    </source>
</evidence>
<evidence type="ECO:0000255" key="2">
    <source>
        <dbReference type="PROSITE-ProRule" id="PRU01197"/>
    </source>
</evidence>
<evidence type="ECO:0000255" key="3">
    <source>
        <dbReference type="PROSITE-ProRule" id="PRU01198"/>
    </source>
</evidence>
<organism>
    <name type="scientific">Novosphingobium aromaticivorans (strain ATCC 700278 / DSM 12444 / CCUG 56034 / CIP 105152 / NBRC 16084 / F199)</name>
    <dbReference type="NCBI Taxonomy" id="279238"/>
    <lineage>
        <taxon>Bacteria</taxon>
        <taxon>Pseudomonadati</taxon>
        <taxon>Pseudomonadota</taxon>
        <taxon>Alphaproteobacteria</taxon>
        <taxon>Sphingomonadales</taxon>
        <taxon>Sphingomonadaceae</taxon>
        <taxon>Novosphingobium</taxon>
    </lineage>
</organism>
<gene>
    <name evidence="1" type="primary">ilvC</name>
    <name type="ordered locus">Saro_2263</name>
</gene>
<keyword id="KW-0028">Amino-acid biosynthesis</keyword>
<keyword id="KW-0100">Branched-chain amino acid biosynthesis</keyword>
<keyword id="KW-0460">Magnesium</keyword>
<keyword id="KW-0479">Metal-binding</keyword>
<keyword id="KW-0521">NADP</keyword>
<keyword id="KW-0560">Oxidoreductase</keyword>
<keyword id="KW-1185">Reference proteome</keyword>
<proteinExistence type="inferred from homology"/>
<dbReference type="EC" id="1.1.1.86" evidence="1"/>
<dbReference type="EMBL" id="CP000248">
    <property type="protein sequence ID" value="ABD26700.1"/>
    <property type="molecule type" value="Genomic_DNA"/>
</dbReference>
<dbReference type="SMR" id="Q2G623"/>
<dbReference type="STRING" id="279238.Saro_2263"/>
<dbReference type="KEGG" id="nar:Saro_2263"/>
<dbReference type="eggNOG" id="COG0059">
    <property type="taxonomic scope" value="Bacteria"/>
</dbReference>
<dbReference type="HOGENOM" id="CLU_033821_0_1_5"/>
<dbReference type="UniPathway" id="UPA00047">
    <property type="reaction ID" value="UER00056"/>
</dbReference>
<dbReference type="UniPathway" id="UPA00049">
    <property type="reaction ID" value="UER00060"/>
</dbReference>
<dbReference type="Proteomes" id="UP000009134">
    <property type="component" value="Chromosome"/>
</dbReference>
<dbReference type="GO" id="GO:0005829">
    <property type="term" value="C:cytosol"/>
    <property type="evidence" value="ECO:0007669"/>
    <property type="project" value="TreeGrafter"/>
</dbReference>
<dbReference type="GO" id="GO:0004455">
    <property type="term" value="F:ketol-acid reductoisomerase activity"/>
    <property type="evidence" value="ECO:0007669"/>
    <property type="project" value="UniProtKB-UniRule"/>
</dbReference>
<dbReference type="GO" id="GO:0000287">
    <property type="term" value="F:magnesium ion binding"/>
    <property type="evidence" value="ECO:0007669"/>
    <property type="project" value="UniProtKB-UniRule"/>
</dbReference>
<dbReference type="GO" id="GO:0050661">
    <property type="term" value="F:NADP binding"/>
    <property type="evidence" value="ECO:0007669"/>
    <property type="project" value="InterPro"/>
</dbReference>
<dbReference type="GO" id="GO:0009097">
    <property type="term" value="P:isoleucine biosynthetic process"/>
    <property type="evidence" value="ECO:0007669"/>
    <property type="project" value="UniProtKB-UniRule"/>
</dbReference>
<dbReference type="GO" id="GO:0009099">
    <property type="term" value="P:L-valine biosynthetic process"/>
    <property type="evidence" value="ECO:0007669"/>
    <property type="project" value="UniProtKB-UniRule"/>
</dbReference>
<dbReference type="FunFam" id="3.40.50.720:FF:000023">
    <property type="entry name" value="Ketol-acid reductoisomerase (NADP(+))"/>
    <property type="match status" value="1"/>
</dbReference>
<dbReference type="Gene3D" id="6.10.240.10">
    <property type="match status" value="1"/>
</dbReference>
<dbReference type="Gene3D" id="3.40.50.720">
    <property type="entry name" value="NAD(P)-binding Rossmann-like Domain"/>
    <property type="match status" value="1"/>
</dbReference>
<dbReference type="HAMAP" id="MF_00435">
    <property type="entry name" value="IlvC"/>
    <property type="match status" value="1"/>
</dbReference>
<dbReference type="InterPro" id="IPR008927">
    <property type="entry name" value="6-PGluconate_DH-like_C_sf"/>
</dbReference>
<dbReference type="InterPro" id="IPR013023">
    <property type="entry name" value="KARI"/>
</dbReference>
<dbReference type="InterPro" id="IPR000506">
    <property type="entry name" value="KARI_C"/>
</dbReference>
<dbReference type="InterPro" id="IPR013116">
    <property type="entry name" value="KARI_N"/>
</dbReference>
<dbReference type="InterPro" id="IPR014359">
    <property type="entry name" value="KARI_prok"/>
</dbReference>
<dbReference type="InterPro" id="IPR036291">
    <property type="entry name" value="NAD(P)-bd_dom_sf"/>
</dbReference>
<dbReference type="NCBIfam" id="TIGR00465">
    <property type="entry name" value="ilvC"/>
    <property type="match status" value="1"/>
</dbReference>
<dbReference type="NCBIfam" id="NF004017">
    <property type="entry name" value="PRK05479.1"/>
    <property type="match status" value="1"/>
</dbReference>
<dbReference type="NCBIfam" id="NF009940">
    <property type="entry name" value="PRK13403.1"/>
    <property type="match status" value="1"/>
</dbReference>
<dbReference type="PANTHER" id="PTHR21371">
    <property type="entry name" value="KETOL-ACID REDUCTOISOMERASE, MITOCHONDRIAL"/>
    <property type="match status" value="1"/>
</dbReference>
<dbReference type="PANTHER" id="PTHR21371:SF1">
    <property type="entry name" value="KETOL-ACID REDUCTOISOMERASE, MITOCHONDRIAL"/>
    <property type="match status" value="1"/>
</dbReference>
<dbReference type="Pfam" id="PF01450">
    <property type="entry name" value="KARI_C"/>
    <property type="match status" value="1"/>
</dbReference>
<dbReference type="Pfam" id="PF07991">
    <property type="entry name" value="KARI_N"/>
    <property type="match status" value="1"/>
</dbReference>
<dbReference type="PIRSF" id="PIRSF000116">
    <property type="entry name" value="IlvC_gammaproteo"/>
    <property type="match status" value="1"/>
</dbReference>
<dbReference type="SUPFAM" id="SSF48179">
    <property type="entry name" value="6-phosphogluconate dehydrogenase C-terminal domain-like"/>
    <property type="match status" value="1"/>
</dbReference>
<dbReference type="SUPFAM" id="SSF51735">
    <property type="entry name" value="NAD(P)-binding Rossmann-fold domains"/>
    <property type="match status" value="1"/>
</dbReference>
<dbReference type="PROSITE" id="PS51851">
    <property type="entry name" value="KARI_C"/>
    <property type="match status" value="1"/>
</dbReference>
<dbReference type="PROSITE" id="PS51850">
    <property type="entry name" value="KARI_N"/>
    <property type="match status" value="1"/>
</dbReference>
<accession>Q2G623</accession>
<comment type="function">
    <text evidence="1">Involved in the biosynthesis of branched-chain amino acids (BCAA). Catalyzes an alkyl-migration followed by a ketol-acid reduction of (S)-2-acetolactate (S2AL) to yield (R)-2,3-dihydroxy-isovalerate. In the isomerase reaction, S2AL is rearranged via a Mg-dependent methyl migration to produce 3-hydroxy-3-methyl-2-ketobutyrate (HMKB). In the reductase reaction, this 2-ketoacid undergoes a metal-dependent reduction by NADPH to yield (R)-2,3-dihydroxy-isovalerate.</text>
</comment>
<comment type="catalytic activity">
    <reaction evidence="1">
        <text>(2R)-2,3-dihydroxy-3-methylbutanoate + NADP(+) = (2S)-2-acetolactate + NADPH + H(+)</text>
        <dbReference type="Rhea" id="RHEA:22068"/>
        <dbReference type="ChEBI" id="CHEBI:15378"/>
        <dbReference type="ChEBI" id="CHEBI:49072"/>
        <dbReference type="ChEBI" id="CHEBI:57783"/>
        <dbReference type="ChEBI" id="CHEBI:58349"/>
        <dbReference type="ChEBI" id="CHEBI:58476"/>
        <dbReference type="EC" id="1.1.1.86"/>
    </reaction>
</comment>
<comment type="catalytic activity">
    <reaction evidence="1">
        <text>(2R,3R)-2,3-dihydroxy-3-methylpentanoate + NADP(+) = (S)-2-ethyl-2-hydroxy-3-oxobutanoate + NADPH + H(+)</text>
        <dbReference type="Rhea" id="RHEA:13493"/>
        <dbReference type="ChEBI" id="CHEBI:15378"/>
        <dbReference type="ChEBI" id="CHEBI:49256"/>
        <dbReference type="ChEBI" id="CHEBI:49258"/>
        <dbReference type="ChEBI" id="CHEBI:57783"/>
        <dbReference type="ChEBI" id="CHEBI:58349"/>
        <dbReference type="EC" id="1.1.1.86"/>
    </reaction>
</comment>
<comment type="cofactor">
    <cofactor evidence="1">
        <name>Mg(2+)</name>
        <dbReference type="ChEBI" id="CHEBI:18420"/>
    </cofactor>
    <text evidence="1">Binds 2 magnesium ions per subunit.</text>
</comment>
<comment type="pathway">
    <text evidence="1">Amino-acid biosynthesis; L-isoleucine biosynthesis; L-isoleucine from 2-oxobutanoate: step 2/4.</text>
</comment>
<comment type="pathway">
    <text evidence="1">Amino-acid biosynthesis; L-valine biosynthesis; L-valine from pyruvate: step 2/4.</text>
</comment>
<comment type="similarity">
    <text evidence="1">Belongs to the ketol-acid reductoisomerase family.</text>
</comment>